<protein>
    <recommendedName>
        <fullName>Metalloprotease MTH_856</fullName>
        <ecNumber>3.4.-.-</ecNumber>
    </recommendedName>
</protein>
<feature type="chain" id="PRO_0000142365" description="Metalloprotease MTH_856">
    <location>
        <begin position="1"/>
        <end position="454"/>
    </location>
</feature>
<feature type="region of interest" description="Disordered" evidence="2">
    <location>
        <begin position="92"/>
        <end position="115"/>
    </location>
</feature>
<comment type="function">
    <text evidence="1">Probable metalloprotease.</text>
</comment>
<comment type="similarity">
    <text evidence="3">Belongs to the peptidase U62 family.</text>
</comment>
<dbReference type="EC" id="3.4.-.-"/>
<dbReference type="EMBL" id="AE000666">
    <property type="protein sequence ID" value="AAB85354.1"/>
    <property type="molecule type" value="Genomic_DNA"/>
</dbReference>
<dbReference type="PIR" id="C69214">
    <property type="entry name" value="C69214"/>
</dbReference>
<dbReference type="RefSeq" id="WP_010876489.1">
    <property type="nucleotide sequence ID" value="NC_000916.1"/>
</dbReference>
<dbReference type="SMR" id="O26944"/>
<dbReference type="STRING" id="187420.MTH_856"/>
<dbReference type="PaxDb" id="187420-MTH_856"/>
<dbReference type="EnsemblBacteria" id="AAB85354">
    <property type="protein sequence ID" value="AAB85354"/>
    <property type="gene ID" value="MTH_856"/>
</dbReference>
<dbReference type="GeneID" id="1471264"/>
<dbReference type="KEGG" id="mth:MTH_856"/>
<dbReference type="PATRIC" id="fig|187420.15.peg.841"/>
<dbReference type="HOGENOM" id="CLU_026425_1_2_2"/>
<dbReference type="InParanoid" id="O26944"/>
<dbReference type="Proteomes" id="UP000005223">
    <property type="component" value="Chromosome"/>
</dbReference>
<dbReference type="GO" id="GO:0005829">
    <property type="term" value="C:cytosol"/>
    <property type="evidence" value="ECO:0007669"/>
    <property type="project" value="TreeGrafter"/>
</dbReference>
<dbReference type="GO" id="GO:0008237">
    <property type="term" value="F:metallopeptidase activity"/>
    <property type="evidence" value="ECO:0007669"/>
    <property type="project" value="UniProtKB-KW"/>
</dbReference>
<dbReference type="GO" id="GO:0006508">
    <property type="term" value="P:proteolysis"/>
    <property type="evidence" value="ECO:0007669"/>
    <property type="project" value="UniProtKB-KW"/>
</dbReference>
<dbReference type="Gene3D" id="3.30.2290.10">
    <property type="entry name" value="PmbA/TldD superfamily"/>
    <property type="match status" value="1"/>
</dbReference>
<dbReference type="InterPro" id="IPR045569">
    <property type="entry name" value="Metalloprtase-TldD/E_C"/>
</dbReference>
<dbReference type="InterPro" id="IPR045570">
    <property type="entry name" value="Metalloprtase-TldD/E_cen_dom"/>
</dbReference>
<dbReference type="InterPro" id="IPR002510">
    <property type="entry name" value="Metalloprtase-TldD/E_N"/>
</dbReference>
<dbReference type="InterPro" id="IPR051463">
    <property type="entry name" value="Peptidase_U62_metallo"/>
</dbReference>
<dbReference type="InterPro" id="IPR025502">
    <property type="entry name" value="TldD"/>
</dbReference>
<dbReference type="InterPro" id="IPR035068">
    <property type="entry name" value="TldD/PmbA_N"/>
</dbReference>
<dbReference type="InterPro" id="IPR036059">
    <property type="entry name" value="TldD/PmbA_sf"/>
</dbReference>
<dbReference type="PANTHER" id="PTHR30624:SF0">
    <property type="entry name" value="METALLOPROTEASE SLR0863"/>
    <property type="match status" value="1"/>
</dbReference>
<dbReference type="PANTHER" id="PTHR30624">
    <property type="entry name" value="UNCHARACTERIZED PROTEIN TLDD AND PMBA"/>
    <property type="match status" value="1"/>
</dbReference>
<dbReference type="Pfam" id="PF01523">
    <property type="entry name" value="PmbA_TldD_1st"/>
    <property type="match status" value="1"/>
</dbReference>
<dbReference type="Pfam" id="PF19290">
    <property type="entry name" value="PmbA_TldD_2nd"/>
    <property type="match status" value="1"/>
</dbReference>
<dbReference type="Pfam" id="PF19289">
    <property type="entry name" value="PmbA_TldD_3rd"/>
    <property type="match status" value="1"/>
</dbReference>
<dbReference type="PIRSF" id="PIRSF004919">
    <property type="entry name" value="TldD"/>
    <property type="match status" value="1"/>
</dbReference>
<dbReference type="SUPFAM" id="SSF111283">
    <property type="entry name" value="Putative modulator of DNA gyrase, PmbA/TldD"/>
    <property type="match status" value="1"/>
</dbReference>
<proteinExistence type="inferred from homology"/>
<organism>
    <name type="scientific">Methanothermobacter thermautotrophicus (strain ATCC 29096 / DSM 1053 / JCM 10044 / NBRC 100330 / Delta H)</name>
    <name type="common">Methanobacterium thermoautotrophicum</name>
    <dbReference type="NCBI Taxonomy" id="187420"/>
    <lineage>
        <taxon>Archaea</taxon>
        <taxon>Methanobacteriati</taxon>
        <taxon>Methanobacteriota</taxon>
        <taxon>Methanomada group</taxon>
        <taxon>Methanobacteria</taxon>
        <taxon>Methanobacteriales</taxon>
        <taxon>Methanobacteriaceae</taxon>
        <taxon>Methanothermobacter</taxon>
    </lineage>
</organism>
<accession>O26944</accession>
<evidence type="ECO:0000250" key="1"/>
<evidence type="ECO:0000256" key="2">
    <source>
        <dbReference type="SAM" id="MobiDB-lite"/>
    </source>
</evidence>
<evidence type="ECO:0000305" key="3"/>
<keyword id="KW-0378">Hydrolase</keyword>
<keyword id="KW-0482">Metalloprotease</keyword>
<keyword id="KW-0645">Protease</keyword>
<keyword id="KW-1185">Reference proteome</keyword>
<sequence length="454" mass="48155">MEIDTDYLGSILMDIEDRVEYADIRAGTSRTSSILMKDGKLQEVKSGRASGFRIRVLRNGSWGFAFTDEPSRLGEMALKAIKMTGSLRGDVQVGSGAPSVDKTMVRSSRPPSDVPAAEKRELVSDAHHAASVDGVVSTTVSYVDMESSSAFLNSEGSLIEMAETRVALFLNAVASDGSGIQFGHKSCGGTGGFEILEREDIEELGRRTGEKAVRLLKASPPPSGRFDIVTDPELTGVFIHEALGHAAEADLILQGDSILEGKLGEKIASEGVTIIDDPTIDGFGSYSYDAEGVRAAETVLVENGVLTSLLNSRETAFKLGLEPSGNARSAIGDQPIVRMSNTYLKPGDLSFDELIEDIRNGVYLRGSRGGQVDTGKGIFQFNAAESFRIQDGEIAEPVKDVSLSGNVLETLKNVDGVGSDFRLGIGFCGKSGQSVPVGDGGPHVRIRNAMVGGT</sequence>
<name>Y856_METTH</name>
<reference key="1">
    <citation type="journal article" date="1997" name="J. Bacteriol.">
        <title>Complete genome sequence of Methanobacterium thermoautotrophicum deltaH: functional analysis and comparative genomics.</title>
        <authorList>
            <person name="Smith D.R."/>
            <person name="Doucette-Stamm L.A."/>
            <person name="Deloughery C."/>
            <person name="Lee H.-M."/>
            <person name="Dubois J."/>
            <person name="Aldredge T."/>
            <person name="Bashirzadeh R."/>
            <person name="Blakely D."/>
            <person name="Cook R."/>
            <person name="Gilbert K."/>
            <person name="Harrison D."/>
            <person name="Hoang L."/>
            <person name="Keagle P."/>
            <person name="Lumm W."/>
            <person name="Pothier B."/>
            <person name="Qiu D."/>
            <person name="Spadafora R."/>
            <person name="Vicare R."/>
            <person name="Wang Y."/>
            <person name="Wierzbowski J."/>
            <person name="Gibson R."/>
            <person name="Jiwani N."/>
            <person name="Caruso A."/>
            <person name="Bush D."/>
            <person name="Safer H."/>
            <person name="Patwell D."/>
            <person name="Prabhakar S."/>
            <person name="McDougall S."/>
            <person name="Shimer G."/>
            <person name="Goyal A."/>
            <person name="Pietrovski S."/>
            <person name="Church G.M."/>
            <person name="Daniels C.J."/>
            <person name="Mao J.-I."/>
            <person name="Rice P."/>
            <person name="Noelling J."/>
            <person name="Reeve J.N."/>
        </authorList>
    </citation>
    <scope>NUCLEOTIDE SEQUENCE [LARGE SCALE GENOMIC DNA]</scope>
    <source>
        <strain>ATCC 29096 / DSM 1053 / JCM 10044 / NBRC 100330 / Delta H</strain>
    </source>
</reference>
<gene>
    <name type="ordered locus">MTH_856</name>
</gene>